<gene>
    <name type="primary">ZNF551</name>
    <name type="synonym">KOX23</name>
</gene>
<comment type="function">
    <text>May be involved in transcriptional regulation.</text>
</comment>
<comment type="subcellular location">
    <subcellularLocation>
        <location evidence="5">Nucleus</location>
    </subcellularLocation>
</comment>
<comment type="alternative products">
    <event type="alternative splicing"/>
    <isoform>
        <id>Q7Z340-1</id>
        <name>1</name>
        <sequence type="displayed"/>
    </isoform>
    <isoform>
        <id>Q7Z340-2</id>
        <name>2</name>
        <sequence type="described" ref="VSP_014799"/>
    </isoform>
    <isoform>
        <id>Q7Z340-3</id>
        <name>3</name>
        <sequence type="described" ref="VSP_014800"/>
    </isoform>
</comment>
<comment type="similarity">
    <text evidence="5">Belongs to the krueppel C2H2-type zinc-finger protein family.</text>
</comment>
<comment type="caution">
    <text evidence="5">It is uncertain whether Met-1 or Met-17 is the initiator.</text>
</comment>
<comment type="sequence caution" evidence="5">
    <conflict type="erroneous initiation">
        <sequence resource="EMBL-CDS" id="AAH05868"/>
    </conflict>
    <text>Truncated N-terminus.</text>
</comment>
<feature type="chain" id="PRO_0000047646" description="Zinc finger protein 551">
    <location>
        <begin position="1"/>
        <end position="670"/>
    </location>
</feature>
<feature type="domain" description="KRAB" evidence="2">
    <location>
        <begin position="29"/>
        <end position="100"/>
    </location>
</feature>
<feature type="zinc finger region" description="C2H2-type 1" evidence="1">
    <location>
        <begin position="251"/>
        <end position="273"/>
    </location>
</feature>
<feature type="zinc finger region" description="C2H2-type 2" evidence="1">
    <location>
        <begin position="279"/>
        <end position="301"/>
    </location>
</feature>
<feature type="zinc finger region" description="C2H2-type 3" evidence="1">
    <location>
        <begin position="335"/>
        <end position="357"/>
    </location>
</feature>
<feature type="zinc finger region" description="C2H2-type 4" evidence="1">
    <location>
        <begin position="363"/>
        <end position="385"/>
    </location>
</feature>
<feature type="zinc finger region" description="C2H2-type 5" evidence="1">
    <location>
        <begin position="391"/>
        <end position="413"/>
    </location>
</feature>
<feature type="zinc finger region" description="C2H2-type 6" evidence="1">
    <location>
        <begin position="419"/>
        <end position="441"/>
    </location>
</feature>
<feature type="zinc finger region" description="C2H2-type 7" evidence="1">
    <location>
        <begin position="447"/>
        <end position="469"/>
    </location>
</feature>
<feature type="zinc finger region" description="C2H2-type 8" evidence="1">
    <location>
        <begin position="475"/>
        <end position="497"/>
    </location>
</feature>
<feature type="zinc finger region" description="C2H2-type 9" evidence="1">
    <location>
        <begin position="503"/>
        <end position="525"/>
    </location>
</feature>
<feature type="zinc finger region" description="C2H2-type 10" evidence="1">
    <location>
        <begin position="531"/>
        <end position="553"/>
    </location>
</feature>
<feature type="zinc finger region" description="C2H2-type 11" evidence="1">
    <location>
        <begin position="559"/>
        <end position="581"/>
    </location>
</feature>
<feature type="zinc finger region" description="C2H2-type 12" evidence="1">
    <location>
        <begin position="587"/>
        <end position="609"/>
    </location>
</feature>
<feature type="zinc finger region" description="C2H2-type 13" evidence="1">
    <location>
        <begin position="615"/>
        <end position="637"/>
    </location>
</feature>
<feature type="zinc finger region" description="C2H2-type 14" evidence="1">
    <location>
        <begin position="643"/>
        <end position="665"/>
    </location>
</feature>
<feature type="modified residue" description="Phosphoserine" evidence="6">
    <location>
        <position position="126"/>
    </location>
</feature>
<feature type="cross-link" description="Glycyl lysine isopeptide (Lys-Gly) (interchain with G-Cter in SUMO2)" evidence="7">
    <location>
        <position position="319"/>
    </location>
</feature>
<feature type="splice variant" id="VSP_014799" description="In isoform 2." evidence="3 4">
    <location>
        <begin position="1"/>
        <end position="73"/>
    </location>
</feature>
<feature type="splice variant" id="VSP_014800" description="In isoform 3." evidence="3">
    <location>
        <begin position="363"/>
        <end position="670"/>
    </location>
</feature>
<feature type="sequence variant" id="VAR_028077" description="In dbSNP:rs10413864.">
    <original>N</original>
    <variation>S</variation>
    <location>
        <position position="218"/>
    </location>
</feature>
<feature type="sequence variant" id="VAR_028078" description="In dbSNP:rs12611105.">
    <original>R</original>
    <variation>W</variation>
    <location>
        <position position="550"/>
    </location>
</feature>
<feature type="sequence conflict" description="In Ref. 1; BAC03625." evidence="5" ref="1">
    <original>E</original>
    <variation>R</variation>
    <location>
        <position position="352"/>
    </location>
</feature>
<feature type="sequence conflict" description="In Ref. 1; BAC03625." evidence="5" ref="1">
    <original>Q</original>
    <variation>R</variation>
    <location>
        <position position="354"/>
    </location>
</feature>
<feature type="sequence conflict" description="In Ref. 1; BAC03625." evidence="5" ref="1">
    <original>G</original>
    <variation>E</variation>
    <location>
        <position position="359"/>
    </location>
</feature>
<reference key="1">
    <citation type="journal article" date="2004" name="Nat. Genet.">
        <title>Complete sequencing and characterization of 21,243 full-length human cDNAs.</title>
        <authorList>
            <person name="Ota T."/>
            <person name="Suzuki Y."/>
            <person name="Nishikawa T."/>
            <person name="Otsuki T."/>
            <person name="Sugiyama T."/>
            <person name="Irie R."/>
            <person name="Wakamatsu A."/>
            <person name="Hayashi K."/>
            <person name="Sato H."/>
            <person name="Nagai K."/>
            <person name="Kimura K."/>
            <person name="Makita H."/>
            <person name="Sekine M."/>
            <person name="Obayashi M."/>
            <person name="Nishi T."/>
            <person name="Shibahara T."/>
            <person name="Tanaka T."/>
            <person name="Ishii S."/>
            <person name="Yamamoto J."/>
            <person name="Saito K."/>
            <person name="Kawai Y."/>
            <person name="Isono Y."/>
            <person name="Nakamura Y."/>
            <person name="Nagahari K."/>
            <person name="Murakami K."/>
            <person name="Yasuda T."/>
            <person name="Iwayanagi T."/>
            <person name="Wagatsuma M."/>
            <person name="Shiratori A."/>
            <person name="Sudo H."/>
            <person name="Hosoiri T."/>
            <person name="Kaku Y."/>
            <person name="Kodaira H."/>
            <person name="Kondo H."/>
            <person name="Sugawara M."/>
            <person name="Takahashi M."/>
            <person name="Kanda K."/>
            <person name="Yokoi T."/>
            <person name="Furuya T."/>
            <person name="Kikkawa E."/>
            <person name="Omura Y."/>
            <person name="Abe K."/>
            <person name="Kamihara K."/>
            <person name="Katsuta N."/>
            <person name="Sato K."/>
            <person name="Tanikawa M."/>
            <person name="Yamazaki M."/>
            <person name="Ninomiya K."/>
            <person name="Ishibashi T."/>
            <person name="Yamashita H."/>
            <person name="Murakawa K."/>
            <person name="Fujimori K."/>
            <person name="Tanai H."/>
            <person name="Kimata M."/>
            <person name="Watanabe M."/>
            <person name="Hiraoka S."/>
            <person name="Chiba Y."/>
            <person name="Ishida S."/>
            <person name="Ono Y."/>
            <person name="Takiguchi S."/>
            <person name="Watanabe S."/>
            <person name="Yosida M."/>
            <person name="Hotuta T."/>
            <person name="Kusano J."/>
            <person name="Kanehori K."/>
            <person name="Takahashi-Fujii A."/>
            <person name="Hara H."/>
            <person name="Tanase T.-O."/>
            <person name="Nomura Y."/>
            <person name="Togiya S."/>
            <person name="Komai F."/>
            <person name="Hara R."/>
            <person name="Takeuchi K."/>
            <person name="Arita M."/>
            <person name="Imose N."/>
            <person name="Musashino K."/>
            <person name="Yuuki H."/>
            <person name="Oshima A."/>
            <person name="Sasaki N."/>
            <person name="Aotsuka S."/>
            <person name="Yoshikawa Y."/>
            <person name="Matsunawa H."/>
            <person name="Ichihara T."/>
            <person name="Shiohata N."/>
            <person name="Sano S."/>
            <person name="Moriya S."/>
            <person name="Momiyama H."/>
            <person name="Satoh N."/>
            <person name="Takami S."/>
            <person name="Terashima Y."/>
            <person name="Suzuki O."/>
            <person name="Nakagawa S."/>
            <person name="Senoh A."/>
            <person name="Mizoguchi H."/>
            <person name="Goto Y."/>
            <person name="Shimizu F."/>
            <person name="Wakebe H."/>
            <person name="Hishigaki H."/>
            <person name="Watanabe T."/>
            <person name="Sugiyama A."/>
            <person name="Takemoto M."/>
            <person name="Kawakami B."/>
            <person name="Yamazaki M."/>
            <person name="Watanabe K."/>
            <person name="Kumagai A."/>
            <person name="Itakura S."/>
            <person name="Fukuzumi Y."/>
            <person name="Fujimori Y."/>
            <person name="Komiyama M."/>
            <person name="Tashiro H."/>
            <person name="Tanigami A."/>
            <person name="Fujiwara T."/>
            <person name="Ono T."/>
            <person name="Yamada K."/>
            <person name="Fujii Y."/>
            <person name="Ozaki K."/>
            <person name="Hirao M."/>
            <person name="Ohmori Y."/>
            <person name="Kawabata A."/>
            <person name="Hikiji T."/>
            <person name="Kobatake N."/>
            <person name="Inagaki H."/>
            <person name="Ikema Y."/>
            <person name="Okamoto S."/>
            <person name="Okitani R."/>
            <person name="Kawakami T."/>
            <person name="Noguchi S."/>
            <person name="Itoh T."/>
            <person name="Shigeta K."/>
            <person name="Senba T."/>
            <person name="Matsumura K."/>
            <person name="Nakajima Y."/>
            <person name="Mizuno T."/>
            <person name="Morinaga M."/>
            <person name="Sasaki M."/>
            <person name="Togashi T."/>
            <person name="Oyama M."/>
            <person name="Hata H."/>
            <person name="Watanabe M."/>
            <person name="Komatsu T."/>
            <person name="Mizushima-Sugano J."/>
            <person name="Satoh T."/>
            <person name="Shirai Y."/>
            <person name="Takahashi Y."/>
            <person name="Nakagawa K."/>
            <person name="Okumura K."/>
            <person name="Nagase T."/>
            <person name="Nomura N."/>
            <person name="Kikuchi H."/>
            <person name="Masuho Y."/>
            <person name="Yamashita R."/>
            <person name="Nakai K."/>
            <person name="Yada T."/>
            <person name="Nakamura Y."/>
            <person name="Ohara O."/>
            <person name="Isogai T."/>
            <person name="Sugano S."/>
        </authorList>
    </citation>
    <scope>NUCLEOTIDE SEQUENCE [LARGE SCALE MRNA] (ISOFORM 3)</scope>
    <scope>NUCLEOTIDE SEQUENCE [LARGE SCALE MRNA] OF 1-502 (ISOFORM 2)</scope>
    <source>
        <tissue>Placenta</tissue>
        <tissue>Tongue</tissue>
    </source>
</reference>
<reference key="2">
    <citation type="journal article" date="2007" name="BMC Genomics">
        <title>The full-ORF clone resource of the German cDNA consortium.</title>
        <authorList>
            <person name="Bechtel S."/>
            <person name="Rosenfelder H."/>
            <person name="Duda A."/>
            <person name="Schmidt C.P."/>
            <person name="Ernst U."/>
            <person name="Wellenreuther R."/>
            <person name="Mehrle A."/>
            <person name="Schuster C."/>
            <person name="Bahr A."/>
            <person name="Bloecker H."/>
            <person name="Heubner D."/>
            <person name="Hoerlein A."/>
            <person name="Michel G."/>
            <person name="Wedler H."/>
            <person name="Koehrer K."/>
            <person name="Ottenwaelder B."/>
            <person name="Poustka A."/>
            <person name="Wiemann S."/>
            <person name="Schupp I."/>
        </authorList>
    </citation>
    <scope>NUCLEOTIDE SEQUENCE [LARGE SCALE MRNA] (ISOFORM 2)</scope>
    <source>
        <tissue>Testis</tissue>
    </source>
</reference>
<reference key="3">
    <citation type="journal article" date="2004" name="Nature">
        <title>The DNA sequence and biology of human chromosome 19.</title>
        <authorList>
            <person name="Grimwood J."/>
            <person name="Gordon L.A."/>
            <person name="Olsen A.S."/>
            <person name="Terry A."/>
            <person name="Schmutz J."/>
            <person name="Lamerdin J.E."/>
            <person name="Hellsten U."/>
            <person name="Goodstein D."/>
            <person name="Couronne O."/>
            <person name="Tran-Gyamfi M."/>
            <person name="Aerts A."/>
            <person name="Altherr M."/>
            <person name="Ashworth L."/>
            <person name="Bajorek E."/>
            <person name="Black S."/>
            <person name="Branscomb E."/>
            <person name="Caenepeel S."/>
            <person name="Carrano A.V."/>
            <person name="Caoile C."/>
            <person name="Chan Y.M."/>
            <person name="Christensen M."/>
            <person name="Cleland C.A."/>
            <person name="Copeland A."/>
            <person name="Dalin E."/>
            <person name="Dehal P."/>
            <person name="Denys M."/>
            <person name="Detter J.C."/>
            <person name="Escobar J."/>
            <person name="Flowers D."/>
            <person name="Fotopulos D."/>
            <person name="Garcia C."/>
            <person name="Georgescu A.M."/>
            <person name="Glavina T."/>
            <person name="Gomez M."/>
            <person name="Gonzales E."/>
            <person name="Groza M."/>
            <person name="Hammon N."/>
            <person name="Hawkins T."/>
            <person name="Haydu L."/>
            <person name="Ho I."/>
            <person name="Huang W."/>
            <person name="Israni S."/>
            <person name="Jett J."/>
            <person name="Kadner K."/>
            <person name="Kimball H."/>
            <person name="Kobayashi A."/>
            <person name="Larionov V."/>
            <person name="Leem S.-H."/>
            <person name="Lopez F."/>
            <person name="Lou Y."/>
            <person name="Lowry S."/>
            <person name="Malfatti S."/>
            <person name="Martinez D."/>
            <person name="McCready P.M."/>
            <person name="Medina C."/>
            <person name="Morgan J."/>
            <person name="Nelson K."/>
            <person name="Nolan M."/>
            <person name="Ovcharenko I."/>
            <person name="Pitluck S."/>
            <person name="Pollard M."/>
            <person name="Popkie A.P."/>
            <person name="Predki P."/>
            <person name="Quan G."/>
            <person name="Ramirez L."/>
            <person name="Rash S."/>
            <person name="Retterer J."/>
            <person name="Rodriguez A."/>
            <person name="Rogers S."/>
            <person name="Salamov A."/>
            <person name="Salazar A."/>
            <person name="She X."/>
            <person name="Smith D."/>
            <person name="Slezak T."/>
            <person name="Solovyev V."/>
            <person name="Thayer N."/>
            <person name="Tice H."/>
            <person name="Tsai M."/>
            <person name="Ustaszewska A."/>
            <person name="Vo N."/>
            <person name="Wagner M."/>
            <person name="Wheeler J."/>
            <person name="Wu K."/>
            <person name="Xie G."/>
            <person name="Yang J."/>
            <person name="Dubchak I."/>
            <person name="Furey T.S."/>
            <person name="DeJong P."/>
            <person name="Dickson M."/>
            <person name="Gordon D."/>
            <person name="Eichler E.E."/>
            <person name="Pennacchio L.A."/>
            <person name="Richardson P."/>
            <person name="Stubbs L."/>
            <person name="Rokhsar D.S."/>
            <person name="Myers R.M."/>
            <person name="Rubin E.M."/>
            <person name="Lucas S.M."/>
        </authorList>
    </citation>
    <scope>NUCLEOTIDE SEQUENCE [LARGE SCALE GENOMIC DNA]</scope>
</reference>
<reference key="4">
    <citation type="journal article" date="2004" name="Genome Res.">
        <title>The status, quality, and expansion of the NIH full-length cDNA project: the Mammalian Gene Collection (MGC).</title>
        <authorList>
            <consortium name="The MGC Project Team"/>
        </authorList>
    </citation>
    <scope>NUCLEOTIDE SEQUENCE [LARGE SCALE MRNA] (ISOFORM 1)</scope>
    <source>
        <tissue>Muscle</tissue>
    </source>
</reference>
<reference key="5">
    <citation type="journal article" date="1990" name="New Biol.">
        <title>Multiple genes encoding zinc finger domains are expressed in human T cells.</title>
        <authorList>
            <person name="Thiesen H.-J."/>
        </authorList>
    </citation>
    <scope>NUCLEOTIDE SEQUENCE [MRNA] OF 531-586 (ISOFORMS 1/2)</scope>
    <source>
        <tissue>Lymphoid tissue</tissue>
    </source>
</reference>
<reference key="6">
    <citation type="journal article" date="2013" name="J. Proteome Res.">
        <title>Toward a comprehensive characterization of a human cancer cell phosphoproteome.</title>
        <authorList>
            <person name="Zhou H."/>
            <person name="Di Palma S."/>
            <person name="Preisinger C."/>
            <person name="Peng M."/>
            <person name="Polat A.N."/>
            <person name="Heck A.J."/>
            <person name="Mohammed S."/>
        </authorList>
    </citation>
    <scope>PHOSPHORYLATION [LARGE SCALE ANALYSIS] AT SER-126</scope>
    <scope>IDENTIFICATION BY MASS SPECTROMETRY [LARGE SCALE ANALYSIS]</scope>
    <source>
        <tissue>Erythroleukemia</tissue>
    </source>
</reference>
<reference key="7">
    <citation type="journal article" date="2017" name="Nat. Struct. Mol. Biol.">
        <title>Site-specific mapping of the human SUMO proteome reveals co-modification with phosphorylation.</title>
        <authorList>
            <person name="Hendriks I.A."/>
            <person name="Lyon D."/>
            <person name="Young C."/>
            <person name="Jensen L.J."/>
            <person name="Vertegaal A.C."/>
            <person name="Nielsen M.L."/>
        </authorList>
    </citation>
    <scope>SUMOYLATION [LARGE SCALE ANALYSIS] AT LYS-319</scope>
    <scope>IDENTIFICATION BY MASS SPECTROMETRY [LARGE SCALE ANALYSIS]</scope>
</reference>
<evidence type="ECO:0000255" key="1">
    <source>
        <dbReference type="PROSITE-ProRule" id="PRU00042"/>
    </source>
</evidence>
<evidence type="ECO:0000255" key="2">
    <source>
        <dbReference type="PROSITE-ProRule" id="PRU00119"/>
    </source>
</evidence>
<evidence type="ECO:0000303" key="3">
    <source>
    </source>
</evidence>
<evidence type="ECO:0000303" key="4">
    <source>
    </source>
</evidence>
<evidence type="ECO:0000305" key="5"/>
<evidence type="ECO:0007744" key="6">
    <source>
    </source>
</evidence>
<evidence type="ECO:0007744" key="7">
    <source>
    </source>
</evidence>
<protein>
    <recommendedName>
        <fullName>Zinc finger protein 551</fullName>
    </recommendedName>
    <alternativeName>
        <fullName>Zinc finger protein KOX23</fullName>
    </alternativeName>
</protein>
<dbReference type="EMBL" id="AK091273">
    <property type="protein sequence ID" value="BAC03625.1"/>
    <property type="molecule type" value="mRNA"/>
</dbReference>
<dbReference type="EMBL" id="AK300465">
    <property type="protein sequence ID" value="BAG62184.1"/>
    <property type="molecule type" value="mRNA"/>
</dbReference>
<dbReference type="EMBL" id="BX538151">
    <property type="protein sequence ID" value="CAD98037.1"/>
    <property type="molecule type" value="mRNA"/>
</dbReference>
<dbReference type="EMBL" id="AC004017">
    <property type="status" value="NOT_ANNOTATED_CDS"/>
    <property type="molecule type" value="Genomic_DNA"/>
</dbReference>
<dbReference type="EMBL" id="BC005868">
    <property type="protein sequence ID" value="AAH05868.1"/>
    <property type="status" value="ALT_INIT"/>
    <property type="molecule type" value="mRNA"/>
</dbReference>
<dbReference type="EMBL" id="X52354">
    <property type="protein sequence ID" value="CAA36580.1"/>
    <property type="molecule type" value="mRNA"/>
</dbReference>
<dbReference type="CCDS" id="CCDS12959.2">
    <molecule id="Q7Z340-1"/>
</dbReference>
<dbReference type="PIR" id="I37963">
    <property type="entry name" value="I37963"/>
</dbReference>
<dbReference type="RefSeq" id="NP_001257867.1">
    <property type="nucleotide sequence ID" value="NM_001270938.1"/>
</dbReference>
<dbReference type="RefSeq" id="NP_612356.2">
    <molecule id="Q7Z340-1"/>
    <property type="nucleotide sequence ID" value="NM_138347.5"/>
</dbReference>
<dbReference type="SMR" id="Q7Z340"/>
<dbReference type="BioGRID" id="124681">
    <property type="interactions" value="2"/>
</dbReference>
<dbReference type="FunCoup" id="Q7Z340">
    <property type="interactions" value="26"/>
</dbReference>
<dbReference type="STRING" id="9606.ENSP00000282296"/>
<dbReference type="iPTMnet" id="Q7Z340"/>
<dbReference type="PhosphoSitePlus" id="Q7Z340"/>
<dbReference type="BioMuta" id="ZNF551"/>
<dbReference type="DMDM" id="116242860"/>
<dbReference type="jPOST" id="Q7Z340"/>
<dbReference type="MassIVE" id="Q7Z340"/>
<dbReference type="PaxDb" id="9606-ENSP00000282296"/>
<dbReference type="PeptideAtlas" id="Q7Z340"/>
<dbReference type="ProteomicsDB" id="69004">
    <molecule id="Q7Z340-1"/>
</dbReference>
<dbReference type="ProteomicsDB" id="69005">
    <molecule id="Q7Z340-2"/>
</dbReference>
<dbReference type="ProteomicsDB" id="69006">
    <molecule id="Q7Z340-3"/>
</dbReference>
<dbReference type="Pumba" id="Q7Z340"/>
<dbReference type="Antibodypedia" id="19662">
    <property type="antibodies" value="87 antibodies from 16 providers"/>
</dbReference>
<dbReference type="DNASU" id="90233"/>
<dbReference type="Ensembl" id="ENST00000282296.10">
    <molecule id="Q7Z340-1"/>
    <property type="protein sequence ID" value="ENSP00000282296.5"/>
    <property type="gene ID" value="ENSG00000204519.11"/>
</dbReference>
<dbReference type="GeneID" id="90233"/>
<dbReference type="KEGG" id="hsa:90233"/>
<dbReference type="MANE-Select" id="ENST00000282296.10">
    <property type="protein sequence ID" value="ENSP00000282296.5"/>
    <property type="RefSeq nucleotide sequence ID" value="NM_138347.5"/>
    <property type="RefSeq protein sequence ID" value="NP_612356.2"/>
</dbReference>
<dbReference type="UCSC" id="uc002qpw.6">
    <molecule id="Q7Z340-1"/>
    <property type="organism name" value="human"/>
</dbReference>
<dbReference type="AGR" id="HGNC:25108"/>
<dbReference type="CTD" id="90233"/>
<dbReference type="DisGeNET" id="90233"/>
<dbReference type="GeneCards" id="ZNF551"/>
<dbReference type="HGNC" id="HGNC:25108">
    <property type="gene designation" value="ZNF551"/>
</dbReference>
<dbReference type="HPA" id="ENSG00000204519">
    <property type="expression patterns" value="Low tissue specificity"/>
</dbReference>
<dbReference type="neXtProt" id="NX_Q7Z340"/>
<dbReference type="OpenTargets" id="ENSG00000204519"/>
<dbReference type="PharmGKB" id="PA134993781"/>
<dbReference type="VEuPathDB" id="HostDB:ENSG00000204519"/>
<dbReference type="eggNOG" id="KOG1721">
    <property type="taxonomic scope" value="Eukaryota"/>
</dbReference>
<dbReference type="GeneTree" id="ENSGT00940000154693"/>
<dbReference type="HOGENOM" id="CLU_002678_44_5_1"/>
<dbReference type="InParanoid" id="Q7Z340"/>
<dbReference type="OMA" id="QHTGGMH"/>
<dbReference type="OrthoDB" id="4748970at2759"/>
<dbReference type="PAN-GO" id="Q7Z340">
    <property type="GO annotations" value="4 GO annotations based on evolutionary models"/>
</dbReference>
<dbReference type="PhylomeDB" id="Q7Z340"/>
<dbReference type="TreeFam" id="TF339848"/>
<dbReference type="PathwayCommons" id="Q7Z340"/>
<dbReference type="Reactome" id="R-HSA-212436">
    <property type="pathway name" value="Generic Transcription Pathway"/>
</dbReference>
<dbReference type="BioGRID-ORCS" id="90233">
    <property type="hits" value="12 hits in 1181 CRISPR screens"/>
</dbReference>
<dbReference type="ChiTaRS" id="ZNF551">
    <property type="organism name" value="human"/>
</dbReference>
<dbReference type="GenomeRNAi" id="90233"/>
<dbReference type="Pharos" id="Q7Z340">
    <property type="development level" value="Tdark"/>
</dbReference>
<dbReference type="PRO" id="PR:Q7Z340"/>
<dbReference type="Proteomes" id="UP000005640">
    <property type="component" value="Chromosome 19"/>
</dbReference>
<dbReference type="RNAct" id="Q7Z340">
    <property type="molecule type" value="protein"/>
</dbReference>
<dbReference type="Bgee" id="ENSG00000204519">
    <property type="expression patterns" value="Expressed in buccal mucosa cell and 162 other cell types or tissues"/>
</dbReference>
<dbReference type="ExpressionAtlas" id="Q7Z340">
    <property type="expression patterns" value="baseline and differential"/>
</dbReference>
<dbReference type="GO" id="GO:0005634">
    <property type="term" value="C:nucleus"/>
    <property type="evidence" value="ECO:0000318"/>
    <property type="project" value="GO_Central"/>
</dbReference>
<dbReference type="GO" id="GO:0000981">
    <property type="term" value="F:DNA-binding transcription factor activity, RNA polymerase II-specific"/>
    <property type="evidence" value="ECO:0000318"/>
    <property type="project" value="GO_Central"/>
</dbReference>
<dbReference type="GO" id="GO:0000978">
    <property type="term" value="F:RNA polymerase II cis-regulatory region sequence-specific DNA binding"/>
    <property type="evidence" value="ECO:0000318"/>
    <property type="project" value="GO_Central"/>
</dbReference>
<dbReference type="GO" id="GO:0008270">
    <property type="term" value="F:zinc ion binding"/>
    <property type="evidence" value="ECO:0007669"/>
    <property type="project" value="UniProtKB-KW"/>
</dbReference>
<dbReference type="GO" id="GO:0006357">
    <property type="term" value="P:regulation of transcription by RNA polymerase II"/>
    <property type="evidence" value="ECO:0000318"/>
    <property type="project" value="GO_Central"/>
</dbReference>
<dbReference type="CDD" id="cd07765">
    <property type="entry name" value="KRAB_A-box"/>
    <property type="match status" value="1"/>
</dbReference>
<dbReference type="FunFam" id="3.30.160.60:FF:001833">
    <property type="match status" value="1"/>
</dbReference>
<dbReference type="FunFam" id="3.30.160.60:FF:000100">
    <property type="entry name" value="Zinc finger 45-like"/>
    <property type="match status" value="1"/>
</dbReference>
<dbReference type="FunFam" id="3.30.160.60:FF:000249">
    <property type="entry name" value="Zinc finger protein 154"/>
    <property type="match status" value="2"/>
</dbReference>
<dbReference type="FunFam" id="3.30.160.60:FF:000987">
    <property type="entry name" value="Zinc finger protein 275"/>
    <property type="match status" value="1"/>
</dbReference>
<dbReference type="FunFam" id="3.30.160.60:FF:002343">
    <property type="entry name" value="Zinc finger protein 33A"/>
    <property type="match status" value="2"/>
</dbReference>
<dbReference type="FunFam" id="3.30.160.60:FF:000135">
    <property type="entry name" value="Zinc finger protein 358"/>
    <property type="match status" value="3"/>
</dbReference>
<dbReference type="FunFam" id="3.30.160.60:FF:001498">
    <property type="entry name" value="Zinc finger protein 404"/>
    <property type="match status" value="1"/>
</dbReference>
<dbReference type="FunFam" id="3.30.160.60:FF:001939">
    <property type="entry name" value="Zinc finger protein 551"/>
    <property type="match status" value="1"/>
</dbReference>
<dbReference type="FunFam" id="3.30.160.60:FF:001270">
    <property type="entry name" value="zinc finger protein 583 isoform X1"/>
    <property type="match status" value="1"/>
</dbReference>
<dbReference type="FunFam" id="3.30.160.60:FF:000320">
    <property type="entry name" value="Zinc finger protein 777"/>
    <property type="match status" value="1"/>
</dbReference>
<dbReference type="FunFam" id="3.30.160.60:FF:001157">
    <property type="entry name" value="Zinc finger protein 793"/>
    <property type="match status" value="1"/>
</dbReference>
<dbReference type="Gene3D" id="6.10.140.140">
    <property type="match status" value="1"/>
</dbReference>
<dbReference type="Gene3D" id="3.30.160.60">
    <property type="entry name" value="Classic Zinc Finger"/>
    <property type="match status" value="15"/>
</dbReference>
<dbReference type="InterPro" id="IPR001909">
    <property type="entry name" value="KRAB"/>
</dbReference>
<dbReference type="InterPro" id="IPR036051">
    <property type="entry name" value="KRAB_dom_sf"/>
</dbReference>
<dbReference type="InterPro" id="IPR050331">
    <property type="entry name" value="Zinc_finger"/>
</dbReference>
<dbReference type="InterPro" id="IPR036236">
    <property type="entry name" value="Znf_C2H2_sf"/>
</dbReference>
<dbReference type="InterPro" id="IPR013087">
    <property type="entry name" value="Znf_C2H2_type"/>
</dbReference>
<dbReference type="PANTHER" id="PTHR16515">
    <property type="entry name" value="PR DOMAIN ZINC FINGER PROTEIN"/>
    <property type="match status" value="1"/>
</dbReference>
<dbReference type="PANTHER" id="PTHR16515:SF58">
    <property type="entry name" value="ZINC FINGER PROTEIN 22"/>
    <property type="match status" value="1"/>
</dbReference>
<dbReference type="Pfam" id="PF01352">
    <property type="entry name" value="KRAB"/>
    <property type="match status" value="1"/>
</dbReference>
<dbReference type="Pfam" id="PF00096">
    <property type="entry name" value="zf-C2H2"/>
    <property type="match status" value="12"/>
</dbReference>
<dbReference type="SMART" id="SM00349">
    <property type="entry name" value="KRAB"/>
    <property type="match status" value="1"/>
</dbReference>
<dbReference type="SMART" id="SM00355">
    <property type="entry name" value="ZnF_C2H2"/>
    <property type="match status" value="15"/>
</dbReference>
<dbReference type="SUPFAM" id="SSF57667">
    <property type="entry name" value="beta-beta-alpha zinc fingers"/>
    <property type="match status" value="8"/>
</dbReference>
<dbReference type="SUPFAM" id="SSF109640">
    <property type="entry name" value="KRAB domain (Kruppel-associated box)"/>
    <property type="match status" value="1"/>
</dbReference>
<dbReference type="PROSITE" id="PS50805">
    <property type="entry name" value="KRAB"/>
    <property type="match status" value="1"/>
</dbReference>
<dbReference type="PROSITE" id="PS00028">
    <property type="entry name" value="ZINC_FINGER_C2H2_1"/>
    <property type="match status" value="14"/>
</dbReference>
<dbReference type="PROSITE" id="PS50157">
    <property type="entry name" value="ZINC_FINGER_C2H2_2"/>
    <property type="match status" value="16"/>
</dbReference>
<proteinExistence type="evidence at protein level"/>
<keyword id="KW-0025">Alternative splicing</keyword>
<keyword id="KW-0238">DNA-binding</keyword>
<keyword id="KW-1017">Isopeptide bond</keyword>
<keyword id="KW-0479">Metal-binding</keyword>
<keyword id="KW-0539">Nucleus</keyword>
<keyword id="KW-0597">Phosphoprotein</keyword>
<keyword id="KW-1267">Proteomics identification</keyword>
<keyword id="KW-1185">Reference proteome</keyword>
<keyword id="KW-0677">Repeat</keyword>
<keyword id="KW-0804">Transcription</keyword>
<keyword id="KW-0805">Transcription regulation</keyword>
<keyword id="KW-0832">Ubl conjugation</keyword>
<keyword id="KW-0862">Zinc</keyword>
<keyword id="KW-0863">Zinc-finger</keyword>
<name>ZN551_HUMAN</name>
<sequence length="670" mass="77515">MPAPVGRRSPPSPRSSMAAVALRDSAQGMTFEDVAIYFSQEEWELLDESQRFLYCDVMLENFAHVTSLGYCHGMENEAIASEQSVSIQVRTSKGNTPTQKTHLSEIKMCVPVLKDILPAAEHQTTSPVQKSYLGSTSMRGFCFSADLHQHQKHYNEEEPWKRKVDEATFVTGCRFHVLNYFTCGEAFPAPTDLLQHEATPSGEEPHSSSSKHIQAFFNAKSYYKWGEYRKASSHKHTLVQHQSVCSEGGLYECSKCEKAFTCKNTLVQHQQIHTGQKMFECSECEESFSKKCHLILHKIIHTGERPYECSDREKAFIHKSEFIHHQRRHTGGVRHECGECRKTFSYKSNLIEHQRVHTGERPYECGECGKSFRQSSSLFRHQRVHSGERPYQCCECGKSFRQIFNLIRHRRVHTGEMPYQCSDCGKSFSCKSELIQHQRIHSGERPYECRECGKSFRQFSNLIRHRSIHTGDRPYECSECEKSFSRKFILIQHQRVHTGERPYECSECGKSFTRKSDLIQHRRIHTGTRPYECSECGKSFRQRSGLIQHRRLHTGERPYECSECGKSFSQSASLIQHQRVHTGERPYECSECGKSFSQSSSLIQHQRGHTGERPYECSQCGKPFTHKSDLIQHQRVHTGERPYECSECGKSFSRKSNLIRHRRVHTEERP</sequence>
<organism>
    <name type="scientific">Homo sapiens</name>
    <name type="common">Human</name>
    <dbReference type="NCBI Taxonomy" id="9606"/>
    <lineage>
        <taxon>Eukaryota</taxon>
        <taxon>Metazoa</taxon>
        <taxon>Chordata</taxon>
        <taxon>Craniata</taxon>
        <taxon>Vertebrata</taxon>
        <taxon>Euteleostomi</taxon>
        <taxon>Mammalia</taxon>
        <taxon>Eutheria</taxon>
        <taxon>Euarchontoglires</taxon>
        <taxon>Primates</taxon>
        <taxon>Haplorrhini</taxon>
        <taxon>Catarrhini</taxon>
        <taxon>Hominidae</taxon>
        <taxon>Homo</taxon>
    </lineage>
</organism>
<accession>Q7Z340</accession>
<accession>B4DU22</accession>
<accession>P17034</accession>
<accession>Q8N246</accession>
<accession>Q9BRY1</accession>